<proteinExistence type="inferred from homology"/>
<accession>A8IKV6</accession>
<dbReference type="EMBL" id="AP009384">
    <property type="protein sequence ID" value="BAF89953.1"/>
    <property type="molecule type" value="Genomic_DNA"/>
</dbReference>
<dbReference type="RefSeq" id="WP_012172475.1">
    <property type="nucleotide sequence ID" value="NC_009937.1"/>
</dbReference>
<dbReference type="SMR" id="A8IKV6"/>
<dbReference type="STRING" id="438753.AZC_3955"/>
<dbReference type="KEGG" id="azc:AZC_3955"/>
<dbReference type="eggNOG" id="COG0335">
    <property type="taxonomic scope" value="Bacteria"/>
</dbReference>
<dbReference type="HOGENOM" id="CLU_103507_0_2_5"/>
<dbReference type="Proteomes" id="UP000000270">
    <property type="component" value="Chromosome"/>
</dbReference>
<dbReference type="GO" id="GO:0022625">
    <property type="term" value="C:cytosolic large ribosomal subunit"/>
    <property type="evidence" value="ECO:0007669"/>
    <property type="project" value="TreeGrafter"/>
</dbReference>
<dbReference type="GO" id="GO:0003735">
    <property type="term" value="F:structural constituent of ribosome"/>
    <property type="evidence" value="ECO:0007669"/>
    <property type="project" value="InterPro"/>
</dbReference>
<dbReference type="GO" id="GO:0006412">
    <property type="term" value="P:translation"/>
    <property type="evidence" value="ECO:0007669"/>
    <property type="project" value="UniProtKB-UniRule"/>
</dbReference>
<dbReference type="FunFam" id="2.30.30.790:FF:000001">
    <property type="entry name" value="50S ribosomal protein L19"/>
    <property type="match status" value="1"/>
</dbReference>
<dbReference type="Gene3D" id="2.30.30.790">
    <property type="match status" value="1"/>
</dbReference>
<dbReference type="HAMAP" id="MF_00402">
    <property type="entry name" value="Ribosomal_bL19"/>
    <property type="match status" value="1"/>
</dbReference>
<dbReference type="InterPro" id="IPR001857">
    <property type="entry name" value="Ribosomal_bL19"/>
</dbReference>
<dbReference type="InterPro" id="IPR018257">
    <property type="entry name" value="Ribosomal_bL19_CS"/>
</dbReference>
<dbReference type="InterPro" id="IPR038657">
    <property type="entry name" value="Ribosomal_bL19_sf"/>
</dbReference>
<dbReference type="InterPro" id="IPR008991">
    <property type="entry name" value="Translation_prot_SH3-like_sf"/>
</dbReference>
<dbReference type="NCBIfam" id="TIGR01024">
    <property type="entry name" value="rplS_bact"/>
    <property type="match status" value="1"/>
</dbReference>
<dbReference type="PANTHER" id="PTHR15680:SF9">
    <property type="entry name" value="LARGE RIBOSOMAL SUBUNIT PROTEIN BL19M"/>
    <property type="match status" value="1"/>
</dbReference>
<dbReference type="PANTHER" id="PTHR15680">
    <property type="entry name" value="RIBOSOMAL PROTEIN L19"/>
    <property type="match status" value="1"/>
</dbReference>
<dbReference type="Pfam" id="PF01245">
    <property type="entry name" value="Ribosomal_L19"/>
    <property type="match status" value="1"/>
</dbReference>
<dbReference type="PIRSF" id="PIRSF002191">
    <property type="entry name" value="Ribosomal_L19"/>
    <property type="match status" value="1"/>
</dbReference>
<dbReference type="PRINTS" id="PR00061">
    <property type="entry name" value="RIBOSOMALL19"/>
</dbReference>
<dbReference type="SUPFAM" id="SSF50104">
    <property type="entry name" value="Translation proteins SH3-like domain"/>
    <property type="match status" value="1"/>
</dbReference>
<dbReference type="PROSITE" id="PS01015">
    <property type="entry name" value="RIBOSOMAL_L19"/>
    <property type="match status" value="1"/>
</dbReference>
<organism>
    <name type="scientific">Azorhizobium caulinodans (strain ATCC 43989 / DSM 5975 / JCM 20966 / LMG 6465 / NBRC 14845 / NCIMB 13405 / ORS 571)</name>
    <dbReference type="NCBI Taxonomy" id="438753"/>
    <lineage>
        <taxon>Bacteria</taxon>
        <taxon>Pseudomonadati</taxon>
        <taxon>Pseudomonadota</taxon>
        <taxon>Alphaproteobacteria</taxon>
        <taxon>Hyphomicrobiales</taxon>
        <taxon>Xanthobacteraceae</taxon>
        <taxon>Azorhizobium</taxon>
    </lineage>
</organism>
<comment type="function">
    <text evidence="1">This protein is located at the 30S-50S ribosomal subunit interface and may play a role in the structure and function of the aminoacyl-tRNA binding site.</text>
</comment>
<comment type="similarity">
    <text evidence="1">Belongs to the bacterial ribosomal protein bL19 family.</text>
</comment>
<evidence type="ECO:0000255" key="1">
    <source>
        <dbReference type="HAMAP-Rule" id="MF_00402"/>
    </source>
</evidence>
<evidence type="ECO:0000256" key="2">
    <source>
        <dbReference type="SAM" id="MobiDB-lite"/>
    </source>
</evidence>
<evidence type="ECO:0000305" key="3"/>
<reference key="1">
    <citation type="submission" date="2007-04" db="EMBL/GenBank/DDBJ databases">
        <title>Complete genome sequence of the nitrogen-fixing bacterium Azorhizobium caulinodans ORS571.</title>
        <authorList>
            <person name="Lee K.B."/>
            <person name="Backer P.D."/>
            <person name="Aono T."/>
            <person name="Liu C.T."/>
            <person name="Suzuki S."/>
            <person name="Suzuki T."/>
            <person name="Kaneko T."/>
            <person name="Yamada M."/>
            <person name="Tabata S."/>
            <person name="Kupfer D.M."/>
            <person name="Najar F.Z."/>
            <person name="Wiley G.B."/>
            <person name="Roe B."/>
            <person name="Binnewies T."/>
            <person name="Ussery D."/>
            <person name="Vereecke D."/>
            <person name="Gevers D."/>
            <person name="Holsters M."/>
            <person name="Oyaizu H."/>
        </authorList>
    </citation>
    <scope>NUCLEOTIDE SEQUENCE [LARGE SCALE GENOMIC DNA]</scope>
    <source>
        <strain>ATCC 43989 / DSM 5975 / JCM 20966 / LMG 6465 / NBRC 14845 / NCIMB 13405 / ORS 571</strain>
    </source>
</reference>
<keyword id="KW-1185">Reference proteome</keyword>
<keyword id="KW-0687">Ribonucleoprotein</keyword>
<keyword id="KW-0689">Ribosomal protein</keyword>
<sequence>MNIIQQLEAEQAARLSETKTIPEFQPGDTVIVNVKVVEGERTRVQAYEGVCIARNGGGLNENFVVRKISYGEGVERVFPIYSPLIDSIKVVRRGKVRRAKLYYLRDRRGKSARIAERTDDRAKKAKATAAE</sequence>
<gene>
    <name evidence="1" type="primary">rplS</name>
    <name type="ordered locus">AZC_3955</name>
</gene>
<name>RL19_AZOC5</name>
<protein>
    <recommendedName>
        <fullName evidence="1">Large ribosomal subunit protein bL19</fullName>
    </recommendedName>
    <alternativeName>
        <fullName evidence="3">50S ribosomal protein L19</fullName>
    </alternativeName>
</protein>
<feature type="chain" id="PRO_1000072240" description="Large ribosomal subunit protein bL19">
    <location>
        <begin position="1"/>
        <end position="131"/>
    </location>
</feature>
<feature type="region of interest" description="Disordered" evidence="2">
    <location>
        <begin position="110"/>
        <end position="131"/>
    </location>
</feature>
<feature type="compositionally biased region" description="Basic and acidic residues" evidence="2">
    <location>
        <begin position="113"/>
        <end position="122"/>
    </location>
</feature>